<keyword id="KW-0131">Cell cycle</keyword>
<keyword id="KW-0132">Cell division</keyword>
<keyword id="KW-0963">Cytoplasm</keyword>
<keyword id="KW-1185">Reference proteome</keyword>
<keyword id="KW-0717">Septation</keyword>
<feature type="chain" id="PRO_0000334038" description="Cell division protein SepF">
    <location>
        <begin position="1"/>
        <end position="218"/>
    </location>
</feature>
<feature type="region of interest" description="Disordered" evidence="2">
    <location>
        <begin position="20"/>
        <end position="81"/>
    </location>
</feature>
<feature type="compositionally biased region" description="Basic and acidic residues" evidence="2">
    <location>
        <begin position="36"/>
        <end position="65"/>
    </location>
</feature>
<proteinExistence type="inferred from homology"/>
<gene>
    <name evidence="1" type="primary">sepF</name>
    <name type="ordered locus">BQ2027_MB2171C</name>
</gene>
<evidence type="ECO:0000255" key="1">
    <source>
        <dbReference type="HAMAP-Rule" id="MF_01197"/>
    </source>
</evidence>
<evidence type="ECO:0000256" key="2">
    <source>
        <dbReference type="SAM" id="MobiDB-lite"/>
    </source>
</evidence>
<evidence type="ECO:0000305" key="3"/>
<comment type="function">
    <text evidence="1">Cell division protein that is part of the divisome complex and is recruited early to the Z-ring. Probably stimulates Z-ring formation, perhaps through the cross-linking of FtsZ protofilaments. Its function overlaps with FtsA.</text>
</comment>
<comment type="subunit">
    <text evidence="1">Homodimer. Interacts with FtsZ.</text>
</comment>
<comment type="subcellular location">
    <subcellularLocation>
        <location evidence="1">Cytoplasm</location>
    </subcellularLocation>
    <text evidence="1">Localizes to the division site, in a FtsZ-dependent manner.</text>
</comment>
<comment type="similarity">
    <text evidence="1">Belongs to the SepF family.</text>
</comment>
<comment type="sequence caution" evidence="3">
    <conflict type="erroneous initiation">
        <sequence resource="EMBL-CDS" id="SIU00779"/>
    </conflict>
    <text>Extended N-terminus.</text>
</comment>
<organism>
    <name type="scientific">Mycobacterium bovis (strain ATCC BAA-935 / AF2122/97)</name>
    <dbReference type="NCBI Taxonomy" id="233413"/>
    <lineage>
        <taxon>Bacteria</taxon>
        <taxon>Bacillati</taxon>
        <taxon>Actinomycetota</taxon>
        <taxon>Actinomycetes</taxon>
        <taxon>Mycobacteriales</taxon>
        <taxon>Mycobacteriaceae</taxon>
        <taxon>Mycobacterium</taxon>
        <taxon>Mycobacterium tuberculosis complex</taxon>
    </lineage>
</organism>
<accession>Q7TYZ5</accession>
<accession>A0A1R3Y0E3</accession>
<accession>X2BK20</accession>
<name>SEPF_MYCBO</name>
<reference key="1">
    <citation type="journal article" date="2003" name="Proc. Natl. Acad. Sci. U.S.A.">
        <title>The complete genome sequence of Mycobacterium bovis.</title>
        <authorList>
            <person name="Garnier T."/>
            <person name="Eiglmeier K."/>
            <person name="Camus J.-C."/>
            <person name="Medina N."/>
            <person name="Mansoor H."/>
            <person name="Pryor M."/>
            <person name="Duthoy S."/>
            <person name="Grondin S."/>
            <person name="Lacroix C."/>
            <person name="Monsempe C."/>
            <person name="Simon S."/>
            <person name="Harris B."/>
            <person name="Atkin R."/>
            <person name="Doggett J."/>
            <person name="Mayes R."/>
            <person name="Keating L."/>
            <person name="Wheeler P.R."/>
            <person name="Parkhill J."/>
            <person name="Barrell B.G."/>
            <person name="Cole S.T."/>
            <person name="Gordon S.V."/>
            <person name="Hewinson R.G."/>
        </authorList>
    </citation>
    <scope>NUCLEOTIDE SEQUENCE [LARGE SCALE GENOMIC DNA]</scope>
    <source>
        <strain>ATCC BAA-935 / AF2122/97</strain>
    </source>
</reference>
<reference key="2">
    <citation type="journal article" date="2017" name="Genome Announc.">
        <title>Updated reference genome sequence and annotation of Mycobacterium bovis AF2122/97.</title>
        <authorList>
            <person name="Malone K.M."/>
            <person name="Farrell D."/>
            <person name="Stuber T.P."/>
            <person name="Schubert O.T."/>
            <person name="Aebersold R."/>
            <person name="Robbe-Austerman S."/>
            <person name="Gordon S.V."/>
        </authorList>
    </citation>
    <scope>NUCLEOTIDE SEQUENCE [LARGE SCALE GENOMIC DNA]</scope>
    <scope>GENOME REANNOTATION</scope>
    <source>
        <strain>ATCC BAA-935 / AF2122/97</strain>
    </source>
</reference>
<protein>
    <recommendedName>
        <fullName evidence="1">Cell division protein SepF</fullName>
    </recommendedName>
</protein>
<dbReference type="EMBL" id="LT708304">
    <property type="protein sequence ID" value="SIU00779.1"/>
    <property type="status" value="ALT_INIT"/>
    <property type="molecule type" value="Genomic_DNA"/>
</dbReference>
<dbReference type="RefSeq" id="NP_855820.1">
    <property type="nucleotide sequence ID" value="NC_002945.3"/>
</dbReference>
<dbReference type="RefSeq" id="WP_003411133.1">
    <property type="nucleotide sequence ID" value="NC_002945.4"/>
</dbReference>
<dbReference type="SMR" id="Q7TYZ5"/>
<dbReference type="GeneID" id="45426125"/>
<dbReference type="KEGG" id="mbo:BQ2027_MB2171C"/>
<dbReference type="PATRIC" id="fig|233413.5.peg.2387"/>
<dbReference type="Proteomes" id="UP000001419">
    <property type="component" value="Chromosome"/>
</dbReference>
<dbReference type="GO" id="GO:0005737">
    <property type="term" value="C:cytoplasm"/>
    <property type="evidence" value="ECO:0007669"/>
    <property type="project" value="UniProtKB-SubCell"/>
</dbReference>
<dbReference type="GO" id="GO:0000917">
    <property type="term" value="P:division septum assembly"/>
    <property type="evidence" value="ECO:0007669"/>
    <property type="project" value="UniProtKB-KW"/>
</dbReference>
<dbReference type="GO" id="GO:0043093">
    <property type="term" value="P:FtsZ-dependent cytokinesis"/>
    <property type="evidence" value="ECO:0007669"/>
    <property type="project" value="UniProtKB-UniRule"/>
</dbReference>
<dbReference type="FunFam" id="3.30.110.150:FF:000001">
    <property type="entry name" value="Cell division protein SepF"/>
    <property type="match status" value="1"/>
</dbReference>
<dbReference type="Gene3D" id="3.30.110.150">
    <property type="entry name" value="SepF-like protein"/>
    <property type="match status" value="1"/>
</dbReference>
<dbReference type="HAMAP" id="MF_01197">
    <property type="entry name" value="SepF"/>
    <property type="match status" value="1"/>
</dbReference>
<dbReference type="InterPro" id="IPR023052">
    <property type="entry name" value="Cell_div_SepF"/>
</dbReference>
<dbReference type="InterPro" id="IPR007561">
    <property type="entry name" value="Cell_div_SepF/SepF-rel"/>
</dbReference>
<dbReference type="InterPro" id="IPR038594">
    <property type="entry name" value="SepF-like_sf"/>
</dbReference>
<dbReference type="PANTHER" id="PTHR35798">
    <property type="entry name" value="CELL DIVISION PROTEIN SEPF"/>
    <property type="match status" value="1"/>
</dbReference>
<dbReference type="PANTHER" id="PTHR35798:SF1">
    <property type="entry name" value="CELL DIVISION PROTEIN SEPF"/>
    <property type="match status" value="1"/>
</dbReference>
<dbReference type="Pfam" id="PF04472">
    <property type="entry name" value="SepF"/>
    <property type="match status" value="1"/>
</dbReference>
<sequence>MSTLHKVKAYFGMAPMEDYDDEYYDDRAPSRGYARPRFDDDYGRYDGRDYDDARSDSRGDLRGEPADYPPPGYRGGYADEPRFRPREFDRAEMTRPRFGSWLRNSTRGALAMDPRRMAMMFEDGHPLSKITTLRPKDYSEARTIGERFRDGSPVIMDLVSMDNADAKRLVDFAAGLAFALRGSFDKVATKVFLLSPADVDVSPEERRRIAETGFYAYQ</sequence>